<organism>
    <name type="scientific">Salinispora tropica (strain ATCC BAA-916 / DSM 44818 / JCM 13857 / NBRC 105044 / CNB-440)</name>
    <dbReference type="NCBI Taxonomy" id="369723"/>
    <lineage>
        <taxon>Bacteria</taxon>
        <taxon>Bacillati</taxon>
        <taxon>Actinomycetota</taxon>
        <taxon>Actinomycetes</taxon>
        <taxon>Micromonosporales</taxon>
        <taxon>Micromonosporaceae</taxon>
        <taxon>Salinispora</taxon>
    </lineage>
</organism>
<proteinExistence type="inferred from homology"/>
<sequence>MLRWLTAGESHGPALVALLEGVPAGVEVTTEEIAGELARRRLGYGRGARMAFEQDEIEIIGGLRHGVTLGSPVAIRVGNSEWPKWRTVMAPDPVDSTELAGQARNAPLTRPRPGHADLAGMQKYGHTDARPILERASARETAARVAVGTVAKALLRQALGIEVVSHVVELGTVATKPGLRPSPADGDRIDADPLRCLDPEASVRMVAEVDAAKKDADTLGGVVEVLAYGVPPGLGSHVQWDRKLDARLATALMSIQAIKGVEIGDGWQQARSRGSVAHDEIIPTATGVRRVTDRAGGLEGGITTGEPLRVRAAMKPISSLNRALSTVDITSGEPATAINQRSDVCAVPAAGVVAEAMVALVLAEAAVEKFGGDSVVEQRRNLAGYLDALVVR</sequence>
<reference key="1">
    <citation type="journal article" date="2007" name="Proc. Natl. Acad. Sci. U.S.A.">
        <title>Genome sequencing reveals complex secondary metabolome in the marine actinomycete Salinispora tropica.</title>
        <authorList>
            <person name="Udwary D.W."/>
            <person name="Zeigler L."/>
            <person name="Asolkar R.N."/>
            <person name="Singan V."/>
            <person name="Lapidus A."/>
            <person name="Fenical W."/>
            <person name="Jensen P.R."/>
            <person name="Moore B.S."/>
        </authorList>
    </citation>
    <scope>NUCLEOTIDE SEQUENCE [LARGE SCALE GENOMIC DNA]</scope>
    <source>
        <strain>ATCC BAA-916 / DSM 44818 / JCM 13857 / NBRC 105044 / CNB-440</strain>
    </source>
</reference>
<dbReference type="EC" id="4.2.3.5" evidence="1"/>
<dbReference type="EMBL" id="CP000667">
    <property type="protein sequence ID" value="ABP54307.1"/>
    <property type="molecule type" value="Genomic_DNA"/>
</dbReference>
<dbReference type="RefSeq" id="WP_011905738.1">
    <property type="nucleotide sequence ID" value="NC_009380.1"/>
</dbReference>
<dbReference type="SMR" id="A4X607"/>
<dbReference type="STRING" id="369723.Strop_1845"/>
<dbReference type="KEGG" id="stp:Strop_1845"/>
<dbReference type="PATRIC" id="fig|369723.5.peg.1893"/>
<dbReference type="eggNOG" id="COG0082">
    <property type="taxonomic scope" value="Bacteria"/>
</dbReference>
<dbReference type="HOGENOM" id="CLU_034547_2_0_11"/>
<dbReference type="UniPathway" id="UPA00053">
    <property type="reaction ID" value="UER00090"/>
</dbReference>
<dbReference type="Proteomes" id="UP000000235">
    <property type="component" value="Chromosome"/>
</dbReference>
<dbReference type="GO" id="GO:0005829">
    <property type="term" value="C:cytosol"/>
    <property type="evidence" value="ECO:0007669"/>
    <property type="project" value="TreeGrafter"/>
</dbReference>
<dbReference type="GO" id="GO:0004107">
    <property type="term" value="F:chorismate synthase activity"/>
    <property type="evidence" value="ECO:0007669"/>
    <property type="project" value="UniProtKB-UniRule"/>
</dbReference>
<dbReference type="GO" id="GO:0010181">
    <property type="term" value="F:FMN binding"/>
    <property type="evidence" value="ECO:0007669"/>
    <property type="project" value="TreeGrafter"/>
</dbReference>
<dbReference type="GO" id="GO:0008652">
    <property type="term" value="P:amino acid biosynthetic process"/>
    <property type="evidence" value="ECO:0007669"/>
    <property type="project" value="UniProtKB-KW"/>
</dbReference>
<dbReference type="GO" id="GO:0009073">
    <property type="term" value="P:aromatic amino acid family biosynthetic process"/>
    <property type="evidence" value="ECO:0007669"/>
    <property type="project" value="UniProtKB-KW"/>
</dbReference>
<dbReference type="GO" id="GO:0009423">
    <property type="term" value="P:chorismate biosynthetic process"/>
    <property type="evidence" value="ECO:0007669"/>
    <property type="project" value="UniProtKB-UniRule"/>
</dbReference>
<dbReference type="CDD" id="cd07304">
    <property type="entry name" value="Chorismate_synthase"/>
    <property type="match status" value="1"/>
</dbReference>
<dbReference type="FunFam" id="3.60.150.10:FF:000002">
    <property type="entry name" value="Chorismate synthase"/>
    <property type="match status" value="1"/>
</dbReference>
<dbReference type="Gene3D" id="3.60.150.10">
    <property type="entry name" value="Chorismate synthase AroC"/>
    <property type="match status" value="1"/>
</dbReference>
<dbReference type="HAMAP" id="MF_00300">
    <property type="entry name" value="Chorismate_synth"/>
    <property type="match status" value="1"/>
</dbReference>
<dbReference type="InterPro" id="IPR000453">
    <property type="entry name" value="Chorismate_synth"/>
</dbReference>
<dbReference type="InterPro" id="IPR035904">
    <property type="entry name" value="Chorismate_synth_AroC_sf"/>
</dbReference>
<dbReference type="InterPro" id="IPR020541">
    <property type="entry name" value="Chorismate_synthase_CS"/>
</dbReference>
<dbReference type="NCBIfam" id="TIGR00033">
    <property type="entry name" value="aroC"/>
    <property type="match status" value="1"/>
</dbReference>
<dbReference type="NCBIfam" id="NF003793">
    <property type="entry name" value="PRK05382.1"/>
    <property type="match status" value="1"/>
</dbReference>
<dbReference type="PANTHER" id="PTHR21085">
    <property type="entry name" value="CHORISMATE SYNTHASE"/>
    <property type="match status" value="1"/>
</dbReference>
<dbReference type="PANTHER" id="PTHR21085:SF0">
    <property type="entry name" value="CHORISMATE SYNTHASE"/>
    <property type="match status" value="1"/>
</dbReference>
<dbReference type="Pfam" id="PF01264">
    <property type="entry name" value="Chorismate_synt"/>
    <property type="match status" value="1"/>
</dbReference>
<dbReference type="PIRSF" id="PIRSF001456">
    <property type="entry name" value="Chorismate_synth"/>
    <property type="match status" value="1"/>
</dbReference>
<dbReference type="SUPFAM" id="SSF103263">
    <property type="entry name" value="Chorismate synthase, AroC"/>
    <property type="match status" value="1"/>
</dbReference>
<dbReference type="PROSITE" id="PS00787">
    <property type="entry name" value="CHORISMATE_SYNTHASE_1"/>
    <property type="match status" value="1"/>
</dbReference>
<dbReference type="PROSITE" id="PS00788">
    <property type="entry name" value="CHORISMATE_SYNTHASE_2"/>
    <property type="match status" value="1"/>
</dbReference>
<dbReference type="PROSITE" id="PS00789">
    <property type="entry name" value="CHORISMATE_SYNTHASE_3"/>
    <property type="match status" value="1"/>
</dbReference>
<keyword id="KW-0028">Amino-acid biosynthesis</keyword>
<keyword id="KW-0057">Aromatic amino acid biosynthesis</keyword>
<keyword id="KW-0274">FAD</keyword>
<keyword id="KW-0285">Flavoprotein</keyword>
<keyword id="KW-0288">FMN</keyword>
<keyword id="KW-0456">Lyase</keyword>
<keyword id="KW-0521">NADP</keyword>
<keyword id="KW-1185">Reference proteome</keyword>
<name>AROC_SALTO</name>
<accession>A4X607</accession>
<protein>
    <recommendedName>
        <fullName evidence="1">Chorismate synthase</fullName>
        <shortName evidence="1">CS</shortName>
        <ecNumber evidence="1">4.2.3.5</ecNumber>
    </recommendedName>
    <alternativeName>
        <fullName evidence="1">5-enolpyruvylshikimate-3-phosphate phospholyase</fullName>
    </alternativeName>
</protein>
<comment type="function">
    <text evidence="1">Catalyzes the anti-1,4-elimination of the C-3 phosphate and the C-6 proR hydrogen from 5-enolpyruvylshikimate-3-phosphate (EPSP) to yield chorismate, which is the branch point compound that serves as the starting substrate for the three terminal pathways of aromatic amino acid biosynthesis. This reaction introduces a second double bond into the aromatic ring system.</text>
</comment>
<comment type="catalytic activity">
    <reaction evidence="1">
        <text>5-O-(1-carboxyvinyl)-3-phosphoshikimate = chorismate + phosphate</text>
        <dbReference type="Rhea" id="RHEA:21020"/>
        <dbReference type="ChEBI" id="CHEBI:29748"/>
        <dbReference type="ChEBI" id="CHEBI:43474"/>
        <dbReference type="ChEBI" id="CHEBI:57701"/>
        <dbReference type="EC" id="4.2.3.5"/>
    </reaction>
</comment>
<comment type="cofactor">
    <cofactor evidence="1">
        <name>FMNH2</name>
        <dbReference type="ChEBI" id="CHEBI:57618"/>
    </cofactor>
    <text evidence="1">Reduced FMN (FMNH(2)).</text>
</comment>
<comment type="pathway">
    <text evidence="1">Metabolic intermediate biosynthesis; chorismate biosynthesis; chorismate from D-erythrose 4-phosphate and phosphoenolpyruvate: step 7/7.</text>
</comment>
<comment type="subunit">
    <text evidence="1">Homotetramer.</text>
</comment>
<comment type="similarity">
    <text evidence="1">Belongs to the chorismate synthase family.</text>
</comment>
<feature type="chain" id="PRO_1000079008" description="Chorismate synthase">
    <location>
        <begin position="1"/>
        <end position="392"/>
    </location>
</feature>
<feature type="binding site" evidence="1">
    <location>
        <position position="40"/>
    </location>
    <ligand>
        <name>NADP(+)</name>
        <dbReference type="ChEBI" id="CHEBI:58349"/>
    </ligand>
</feature>
<feature type="binding site" evidence="1">
    <location>
        <position position="46"/>
    </location>
    <ligand>
        <name>NADP(+)</name>
        <dbReference type="ChEBI" id="CHEBI:58349"/>
    </ligand>
</feature>
<feature type="binding site" evidence="1">
    <location>
        <begin position="135"/>
        <end position="137"/>
    </location>
    <ligand>
        <name>FMN</name>
        <dbReference type="ChEBI" id="CHEBI:58210"/>
    </ligand>
</feature>
<feature type="binding site" evidence="1">
    <location>
        <begin position="256"/>
        <end position="257"/>
    </location>
    <ligand>
        <name>FMN</name>
        <dbReference type="ChEBI" id="CHEBI:58210"/>
    </ligand>
</feature>
<feature type="binding site" evidence="1">
    <location>
        <position position="300"/>
    </location>
    <ligand>
        <name>FMN</name>
        <dbReference type="ChEBI" id="CHEBI:58210"/>
    </ligand>
</feature>
<feature type="binding site" evidence="1">
    <location>
        <begin position="315"/>
        <end position="319"/>
    </location>
    <ligand>
        <name>FMN</name>
        <dbReference type="ChEBI" id="CHEBI:58210"/>
    </ligand>
</feature>
<feature type="binding site" evidence="1">
    <location>
        <position position="341"/>
    </location>
    <ligand>
        <name>FMN</name>
        <dbReference type="ChEBI" id="CHEBI:58210"/>
    </ligand>
</feature>
<evidence type="ECO:0000255" key="1">
    <source>
        <dbReference type="HAMAP-Rule" id="MF_00300"/>
    </source>
</evidence>
<gene>
    <name evidence="1" type="primary">aroC</name>
    <name type="ordered locus">Strop_1845</name>
</gene>